<accession>Q18AN9</accession>
<sequence>MSSPKWTKEQLEVIESRECNLLVAAAAGSGKTAVLVERIIQMITSRENPIDIDKLLVVTFTNAAASEMRERIGDAIGKALDENPENKHLQNQLVLLNKSSITTIHSFCLDVIKSNFHRINLDPNFRIGDQTECAILKQEAIEEVFEDLYEERDEGFLNLVESYAERGGDKEVQDIILGIYSFAMASPEPKKWLIDSAERFNIDENFDFSQSIWARAILDTVKIEINGLCLNMERALKEVESIEELETFAEKLSVEYKKIADISQACNKSWDEAYKKMASMSFENYVKGVKRISKDAPSYIKESKEKAKTIRDKTKKSLESIVSATFNKDNDSIREEIKYLYNIVKPISSVVLRFEEEYSNKKREKGIIDFNDIEHFALNILTDVDEKGNIVPSDIAVGYRNKFYEIFIDEYQDSNLVQEVLLKAVANTETPNRFMVGDVKQSIYRFRQAKPELFLQKYNNYNDKKGSSHRKIMLYKNFRSREEVVDAVNYIFENIMNENIGEIEYTEKERLNLGANFNVDTDEKSIIGGATEIHLIQKDNKLDDDIINDKDDRINNKENEIEEEEKLDNIQLEARMVGNIIKDLMKVNEDGKIQKVYDKGIDGYRPVEFRDIVILLRATSAWAPVFADELMNMDIPTYADVGVGYFDTIEIKTILSLLQIIDNPMQDIPLISVLKSPIFGFTPEDLIDIRVQSKDKIFYEVLKSTAEYDGFTDSQNENESEFIPSEECINKSKDFLIKLKEFKEKSMYMSTDEFIWYLYTRTGYYAYVGALPGGSQRQANLKVLFERAKQFEETSLKGIFNFVNFIEKLKKSSSDMGSAKTLGENANVVRIMSIHKSKGLEFPVVICSAMGKNFNTQDFKKSILYHHNLGYGPQFVDYERRISFPSIAKEALKSKINIENLSEEMRVLYVAFTRAKEKLIITGSTRNIQDSIKRWSNGIESLDTISQYEILKGKNFLDWIMPCVLRHRDLSNLLEEVGLDAVFNVEHNSKWYGKLWNKNDILVEKKSDEEKESIEEILEKIDVNNPDSDYYGEIEEKLNYIYPYEFSTRKPATISVTEIKKIQNNYEEELINTIFEQKVILKKPLFIQNEEEREKISGTERGTIVHLVMEVLDLKNVSSVNDIKSQIRGFVSKGIITEKQASIVNPYKIYKFFASNIGKRMLNAEIINREKSIYAQVNMKDIYIYEKLINNDDKKLYDNESVMLRGIVDAYFEEDNQIVLVDYKTDFVNEENINQIIEKYKKQLDLYADIIETLTGKSVKEKCIYLFGVDEAVCY</sequence>
<proteinExistence type="inferred from homology"/>
<reference key="1">
    <citation type="journal article" date="2006" name="Nat. Genet.">
        <title>The multidrug-resistant human pathogen Clostridium difficile has a highly mobile, mosaic genome.</title>
        <authorList>
            <person name="Sebaihia M."/>
            <person name="Wren B.W."/>
            <person name="Mullany P."/>
            <person name="Fairweather N.F."/>
            <person name="Minton N."/>
            <person name="Stabler R."/>
            <person name="Thomson N.R."/>
            <person name="Roberts A.P."/>
            <person name="Cerdeno-Tarraga A.M."/>
            <person name="Wang H."/>
            <person name="Holden M.T.G."/>
            <person name="Wright A."/>
            <person name="Churcher C."/>
            <person name="Quail M.A."/>
            <person name="Baker S."/>
            <person name="Bason N."/>
            <person name="Brooks K."/>
            <person name="Chillingworth T."/>
            <person name="Cronin A."/>
            <person name="Davis P."/>
            <person name="Dowd L."/>
            <person name="Fraser A."/>
            <person name="Feltwell T."/>
            <person name="Hance Z."/>
            <person name="Holroyd S."/>
            <person name="Jagels K."/>
            <person name="Moule S."/>
            <person name="Mungall K."/>
            <person name="Price C."/>
            <person name="Rabbinowitsch E."/>
            <person name="Sharp S."/>
            <person name="Simmonds M."/>
            <person name="Stevens K."/>
            <person name="Unwin L."/>
            <person name="Whithead S."/>
            <person name="Dupuy B."/>
            <person name="Dougan G."/>
            <person name="Barrell B."/>
            <person name="Parkhill J."/>
        </authorList>
    </citation>
    <scope>NUCLEOTIDE SEQUENCE [LARGE SCALE GENOMIC DNA]</scope>
    <source>
        <strain>630</strain>
    </source>
</reference>
<gene>
    <name evidence="1" type="primary">addA</name>
    <name type="ordered locus">CD630_10410</name>
</gene>
<evidence type="ECO:0000255" key="1">
    <source>
        <dbReference type="HAMAP-Rule" id="MF_01451"/>
    </source>
</evidence>
<dbReference type="EC" id="3.1.-.-" evidence="1"/>
<dbReference type="EC" id="5.6.2.4" evidence="1"/>
<dbReference type="EMBL" id="AM180355">
    <property type="protein sequence ID" value="CAJ67882.1"/>
    <property type="molecule type" value="Genomic_DNA"/>
</dbReference>
<dbReference type="RefSeq" id="WP_011861079.1">
    <property type="nucleotide sequence ID" value="NZ_JAUPES010000006.1"/>
</dbReference>
<dbReference type="RefSeq" id="YP_001087522.1">
    <property type="nucleotide sequence ID" value="NC_009089.1"/>
</dbReference>
<dbReference type="SMR" id="Q18AN9"/>
<dbReference type="STRING" id="272563.CD630_10410"/>
<dbReference type="DNASU" id="4914431"/>
<dbReference type="EnsemblBacteria" id="CAJ67882">
    <property type="protein sequence ID" value="CAJ67882"/>
    <property type="gene ID" value="CD630_10410"/>
</dbReference>
<dbReference type="KEGG" id="cdf:CD630_10410"/>
<dbReference type="KEGG" id="pdc:CDIF630_01181"/>
<dbReference type="PATRIC" id="fig|272563.120.peg.1081"/>
<dbReference type="eggNOG" id="COG1074">
    <property type="taxonomic scope" value="Bacteria"/>
</dbReference>
<dbReference type="OrthoDB" id="9810135at2"/>
<dbReference type="PhylomeDB" id="Q18AN9"/>
<dbReference type="BioCyc" id="PDIF272563:G12WB-1160-MONOMER"/>
<dbReference type="Proteomes" id="UP000001978">
    <property type="component" value="Chromosome"/>
</dbReference>
<dbReference type="GO" id="GO:0005829">
    <property type="term" value="C:cytosol"/>
    <property type="evidence" value="ECO:0007669"/>
    <property type="project" value="TreeGrafter"/>
</dbReference>
<dbReference type="GO" id="GO:0033202">
    <property type="term" value="C:DNA helicase complex"/>
    <property type="evidence" value="ECO:0007669"/>
    <property type="project" value="TreeGrafter"/>
</dbReference>
<dbReference type="GO" id="GO:0043138">
    <property type="term" value="F:3'-5' DNA helicase activity"/>
    <property type="evidence" value="ECO:0007669"/>
    <property type="project" value="UniProtKB-UniRule"/>
</dbReference>
<dbReference type="GO" id="GO:0008408">
    <property type="term" value="F:3'-5' exonuclease activity"/>
    <property type="evidence" value="ECO:0007669"/>
    <property type="project" value="UniProtKB-UniRule"/>
</dbReference>
<dbReference type="GO" id="GO:0005524">
    <property type="term" value="F:ATP binding"/>
    <property type="evidence" value="ECO:0007669"/>
    <property type="project" value="UniProtKB-UniRule"/>
</dbReference>
<dbReference type="GO" id="GO:0016887">
    <property type="term" value="F:ATP hydrolysis activity"/>
    <property type="evidence" value="ECO:0007669"/>
    <property type="project" value="RHEA"/>
</dbReference>
<dbReference type="GO" id="GO:0003690">
    <property type="term" value="F:double-stranded DNA binding"/>
    <property type="evidence" value="ECO:0007669"/>
    <property type="project" value="UniProtKB-UniRule"/>
</dbReference>
<dbReference type="GO" id="GO:0000724">
    <property type="term" value="P:double-strand break repair via homologous recombination"/>
    <property type="evidence" value="ECO:0007669"/>
    <property type="project" value="UniProtKB-UniRule"/>
</dbReference>
<dbReference type="FunFam" id="3.40.50.300:FF:001236">
    <property type="entry name" value="ATP-dependent helicase/nuclease subunit A"/>
    <property type="match status" value="1"/>
</dbReference>
<dbReference type="Gene3D" id="3.90.320.10">
    <property type="match status" value="1"/>
</dbReference>
<dbReference type="Gene3D" id="3.40.50.300">
    <property type="entry name" value="P-loop containing nucleotide triphosphate hydrolases"/>
    <property type="match status" value="4"/>
</dbReference>
<dbReference type="HAMAP" id="MF_01451">
    <property type="entry name" value="AddA"/>
    <property type="match status" value="1"/>
</dbReference>
<dbReference type="InterPro" id="IPR014152">
    <property type="entry name" value="AddA"/>
</dbReference>
<dbReference type="InterPro" id="IPR014017">
    <property type="entry name" value="DNA_helicase_UvrD-like_C"/>
</dbReference>
<dbReference type="InterPro" id="IPR000212">
    <property type="entry name" value="DNA_helicase_UvrD/REP"/>
</dbReference>
<dbReference type="InterPro" id="IPR027417">
    <property type="entry name" value="P-loop_NTPase"/>
</dbReference>
<dbReference type="InterPro" id="IPR011604">
    <property type="entry name" value="PDDEXK-like_dom_sf"/>
</dbReference>
<dbReference type="InterPro" id="IPR038726">
    <property type="entry name" value="PDDEXK_AddAB-type"/>
</dbReference>
<dbReference type="InterPro" id="IPR011335">
    <property type="entry name" value="Restrct_endonuc-II-like"/>
</dbReference>
<dbReference type="InterPro" id="IPR014016">
    <property type="entry name" value="UvrD-like_ATP-bd"/>
</dbReference>
<dbReference type="NCBIfam" id="TIGR02785">
    <property type="entry name" value="addA_Gpos"/>
    <property type="match status" value="1"/>
</dbReference>
<dbReference type="PANTHER" id="PTHR11070:SF48">
    <property type="entry name" value="ATP-DEPENDENT HELICASE_NUCLEASE SUBUNIT A"/>
    <property type="match status" value="1"/>
</dbReference>
<dbReference type="PANTHER" id="PTHR11070">
    <property type="entry name" value="UVRD / RECB / PCRA DNA HELICASE FAMILY MEMBER"/>
    <property type="match status" value="1"/>
</dbReference>
<dbReference type="Pfam" id="PF12705">
    <property type="entry name" value="PDDEXK_1"/>
    <property type="match status" value="1"/>
</dbReference>
<dbReference type="Pfam" id="PF00580">
    <property type="entry name" value="UvrD-helicase"/>
    <property type="match status" value="1"/>
</dbReference>
<dbReference type="Pfam" id="PF13361">
    <property type="entry name" value="UvrD_C"/>
    <property type="match status" value="1"/>
</dbReference>
<dbReference type="SUPFAM" id="SSF52540">
    <property type="entry name" value="P-loop containing nucleoside triphosphate hydrolases"/>
    <property type="match status" value="1"/>
</dbReference>
<dbReference type="SUPFAM" id="SSF52980">
    <property type="entry name" value="Restriction endonuclease-like"/>
    <property type="match status" value="1"/>
</dbReference>
<dbReference type="PROSITE" id="PS51198">
    <property type="entry name" value="UVRD_HELICASE_ATP_BIND"/>
    <property type="match status" value="1"/>
</dbReference>
<dbReference type="PROSITE" id="PS51217">
    <property type="entry name" value="UVRD_HELICASE_CTER"/>
    <property type="match status" value="1"/>
</dbReference>
<protein>
    <recommendedName>
        <fullName evidence="1">ATP-dependent helicase/nuclease subunit A</fullName>
        <ecNumber evidence="1">3.1.-.-</ecNumber>
        <ecNumber evidence="1">5.6.2.4</ecNumber>
    </recommendedName>
    <alternativeName>
        <fullName evidence="1">ATP-dependent helicase/nuclease AddA</fullName>
    </alternativeName>
    <alternativeName>
        <fullName evidence="1">DNA 3'-5' helicase AddA</fullName>
    </alternativeName>
</protein>
<comment type="function">
    <text evidence="1">The heterodimer acts as both an ATP-dependent DNA helicase and an ATP-dependent, dual-direction single-stranded exonuclease. Recognizes the chi site generating a DNA molecule suitable for the initiation of homologous recombination. The AddA nuclease domain is required for chi fragment generation; this subunit has the helicase and 3' -&gt; 5' nuclease activities.</text>
</comment>
<comment type="catalytic activity">
    <reaction evidence="1">
        <text>Couples ATP hydrolysis with the unwinding of duplex DNA by translocating in the 3'-5' direction.</text>
        <dbReference type="EC" id="5.6.2.4"/>
    </reaction>
</comment>
<comment type="catalytic activity">
    <reaction evidence="1">
        <text>ATP + H2O = ADP + phosphate + H(+)</text>
        <dbReference type="Rhea" id="RHEA:13065"/>
        <dbReference type="ChEBI" id="CHEBI:15377"/>
        <dbReference type="ChEBI" id="CHEBI:15378"/>
        <dbReference type="ChEBI" id="CHEBI:30616"/>
        <dbReference type="ChEBI" id="CHEBI:43474"/>
        <dbReference type="ChEBI" id="CHEBI:456216"/>
        <dbReference type="EC" id="5.6.2.4"/>
    </reaction>
</comment>
<comment type="cofactor">
    <cofactor evidence="1">
        <name>Mg(2+)</name>
        <dbReference type="ChEBI" id="CHEBI:18420"/>
    </cofactor>
</comment>
<comment type="subunit">
    <text evidence="1">Heterodimer of AddA and AddB/RexB.</text>
</comment>
<comment type="similarity">
    <text evidence="1">Belongs to the helicase family. AddA subfamily.</text>
</comment>
<organism>
    <name type="scientific">Clostridioides difficile (strain 630)</name>
    <name type="common">Peptoclostridium difficile</name>
    <dbReference type="NCBI Taxonomy" id="272563"/>
    <lineage>
        <taxon>Bacteria</taxon>
        <taxon>Bacillati</taxon>
        <taxon>Bacillota</taxon>
        <taxon>Clostridia</taxon>
        <taxon>Peptostreptococcales</taxon>
        <taxon>Peptostreptococcaceae</taxon>
        <taxon>Clostridioides</taxon>
    </lineage>
</organism>
<name>ADDA_CLOD6</name>
<keyword id="KW-0067">ATP-binding</keyword>
<keyword id="KW-0227">DNA damage</keyword>
<keyword id="KW-0234">DNA repair</keyword>
<keyword id="KW-0238">DNA-binding</keyword>
<keyword id="KW-0269">Exonuclease</keyword>
<keyword id="KW-0347">Helicase</keyword>
<keyword id="KW-0378">Hydrolase</keyword>
<keyword id="KW-0413">Isomerase</keyword>
<keyword id="KW-0540">Nuclease</keyword>
<keyword id="KW-0547">Nucleotide-binding</keyword>
<keyword id="KW-1185">Reference proteome</keyword>
<feature type="chain" id="PRO_0000379257" description="ATP-dependent helicase/nuclease subunit A">
    <location>
        <begin position="1"/>
        <end position="1275"/>
    </location>
</feature>
<feature type="domain" description="UvrD-like helicase ATP-binding" evidence="1">
    <location>
        <begin position="4"/>
        <end position="481"/>
    </location>
</feature>
<feature type="domain" description="UvrD-like helicase C-terminal" evidence="1">
    <location>
        <begin position="531"/>
        <end position="839"/>
    </location>
</feature>
<feature type="binding site" evidence="1">
    <location>
        <begin position="25"/>
        <end position="32"/>
    </location>
    <ligand>
        <name>ATP</name>
        <dbReference type="ChEBI" id="CHEBI:30616"/>
    </ligand>
</feature>